<evidence type="ECO:0000255" key="1">
    <source>
        <dbReference type="HAMAP-Rule" id="MF_02128"/>
    </source>
</evidence>
<organism>
    <name type="scientific">Methanocaldococcus jannaschii (strain ATCC 43067 / DSM 2661 / JAL-1 / JCM 10045 / NBRC 100440)</name>
    <name type="common">Methanococcus jannaschii</name>
    <dbReference type="NCBI Taxonomy" id="243232"/>
    <lineage>
        <taxon>Archaea</taxon>
        <taxon>Methanobacteriati</taxon>
        <taxon>Methanobacteriota</taxon>
        <taxon>Methanomada group</taxon>
        <taxon>Methanococci</taxon>
        <taxon>Methanococcales</taxon>
        <taxon>Methanocaldococcaceae</taxon>
        <taxon>Methanocaldococcus</taxon>
    </lineage>
</organism>
<comment type="function">
    <text evidence="1">Catalyzes the ATP-dependent phosphorylation of thiamine-monophosphate (TMP) to form thiamine-pyrophosphate (TPP), the active form of vitamin B1.</text>
</comment>
<comment type="catalytic activity">
    <reaction evidence="1">
        <text>thiamine phosphate + ATP = thiamine diphosphate + ADP</text>
        <dbReference type="Rhea" id="RHEA:15913"/>
        <dbReference type="ChEBI" id="CHEBI:30616"/>
        <dbReference type="ChEBI" id="CHEBI:37575"/>
        <dbReference type="ChEBI" id="CHEBI:58937"/>
        <dbReference type="ChEBI" id="CHEBI:456216"/>
        <dbReference type="EC" id="2.7.4.16"/>
    </reaction>
</comment>
<comment type="pathway">
    <text evidence="1">Cofactor biosynthesis; thiamine diphosphate biosynthesis; thiamine diphosphate from thiamine phosphate: step 1/1.</text>
</comment>
<comment type="miscellaneous">
    <text evidence="1">Reaction mechanism of ThiL seems to utilize a direct, inline transfer of the gamma-phosphate of ATP to TMP rather than a phosphorylated enzyme intermediate.</text>
</comment>
<comment type="similarity">
    <text evidence="1">Belongs to the thiamine-monophosphate kinase family.</text>
</comment>
<keyword id="KW-0067">ATP-binding</keyword>
<keyword id="KW-0418">Kinase</keyword>
<keyword id="KW-0460">Magnesium</keyword>
<keyword id="KW-0479">Metal-binding</keyword>
<keyword id="KW-0547">Nucleotide-binding</keyword>
<keyword id="KW-1185">Reference proteome</keyword>
<keyword id="KW-0784">Thiamine biosynthesis</keyword>
<keyword id="KW-0808">Transferase</keyword>
<name>THIL_METJA</name>
<sequence>MDEMKVIEIIKKTLKFSNENIVKGIDDDCAIIKIDENFYLVATTDMMVKKAHIPSILSPYEIGGRILTANVSDIASMGAKPLAFLVSISLSKEEANEKFIKELYSGLDDFSKLYDCPVVGGDTNRGDELILSGTAFGITDNPIYRRGKVGDDICVTNDLGRVYCALTLYYMLKENKISYKEFERLCQKYPKIIEKLRKPIARIKEGLLMNKLINGCCDISDGLGKEITYFKNFEIYSDRIFKLIPEDVIEFCDAFNLNPIKVALNSGEEFELLFTTSKFNKVKDSLKGYSKIYKIGKIIEDGQFIDGEEFYGGGYIHKW</sequence>
<reference key="1">
    <citation type="journal article" date="1996" name="Science">
        <title>Complete genome sequence of the methanogenic archaeon, Methanococcus jannaschii.</title>
        <authorList>
            <person name="Bult C.J."/>
            <person name="White O."/>
            <person name="Olsen G.J."/>
            <person name="Zhou L."/>
            <person name="Fleischmann R.D."/>
            <person name="Sutton G.G."/>
            <person name="Blake J.A."/>
            <person name="FitzGerald L.M."/>
            <person name="Clayton R.A."/>
            <person name="Gocayne J.D."/>
            <person name="Kerlavage A.R."/>
            <person name="Dougherty B.A."/>
            <person name="Tomb J.-F."/>
            <person name="Adams M.D."/>
            <person name="Reich C.I."/>
            <person name="Overbeek R."/>
            <person name="Kirkness E.F."/>
            <person name="Weinstock K.G."/>
            <person name="Merrick J.M."/>
            <person name="Glodek A."/>
            <person name="Scott J.L."/>
            <person name="Geoghagen N.S.M."/>
            <person name="Weidman J.F."/>
            <person name="Fuhrmann J.L."/>
            <person name="Nguyen D."/>
            <person name="Utterback T.R."/>
            <person name="Kelley J.M."/>
            <person name="Peterson J.D."/>
            <person name="Sadow P.W."/>
            <person name="Hanna M.C."/>
            <person name="Cotton M.D."/>
            <person name="Roberts K.M."/>
            <person name="Hurst M.A."/>
            <person name="Kaine B.P."/>
            <person name="Borodovsky M."/>
            <person name="Klenk H.-P."/>
            <person name="Fraser C.M."/>
            <person name="Smith H.O."/>
            <person name="Woese C.R."/>
            <person name="Venter J.C."/>
        </authorList>
    </citation>
    <scope>NUCLEOTIDE SEQUENCE [LARGE SCALE GENOMIC DNA]</scope>
    <source>
        <strain>ATCC 43067 / DSM 2661 / JAL-1 / JCM 10045 / NBRC 100440</strain>
    </source>
</reference>
<gene>
    <name evidence="1" type="primary">thiL</name>
    <name type="ordered locus">MJ0028</name>
</gene>
<feature type="chain" id="PRO_0000096201" description="Thiamine-monophosphate kinase">
    <location>
        <begin position="1"/>
        <end position="319"/>
    </location>
</feature>
<feature type="binding site" evidence="1">
    <location>
        <position position="28"/>
    </location>
    <ligand>
        <name>Mg(2+)</name>
        <dbReference type="ChEBI" id="CHEBI:18420"/>
        <label>3</label>
    </ligand>
</feature>
<feature type="binding site" evidence="1">
    <location>
        <position position="28"/>
    </location>
    <ligand>
        <name>Mg(2+)</name>
        <dbReference type="ChEBI" id="CHEBI:18420"/>
        <label>4</label>
    </ligand>
</feature>
<feature type="binding site" evidence="1">
    <location>
        <position position="43"/>
    </location>
    <ligand>
        <name>Mg(2+)</name>
        <dbReference type="ChEBI" id="CHEBI:18420"/>
        <label>4</label>
    </ligand>
</feature>
<feature type="binding site" evidence="1">
    <location>
        <position position="44"/>
    </location>
    <ligand>
        <name>Mg(2+)</name>
        <dbReference type="ChEBI" id="CHEBI:18420"/>
        <label>1</label>
    </ligand>
</feature>
<feature type="binding site" evidence="1">
    <location>
        <position position="45"/>
    </location>
    <ligand>
        <name>Mg(2+)</name>
        <dbReference type="ChEBI" id="CHEBI:18420"/>
        <label>1</label>
    </ligand>
</feature>
<feature type="binding site" evidence="1">
    <location>
        <position position="45"/>
    </location>
    <ligand>
        <name>Mg(2+)</name>
        <dbReference type="ChEBI" id="CHEBI:18420"/>
        <label>2</label>
    </ligand>
</feature>
<feature type="binding site" evidence="1">
    <location>
        <position position="52"/>
    </location>
    <ligand>
        <name>substrate</name>
    </ligand>
</feature>
<feature type="binding site" evidence="1">
    <location>
        <position position="73"/>
    </location>
    <ligand>
        <name>Mg(2+)</name>
        <dbReference type="ChEBI" id="CHEBI:18420"/>
        <label>2</label>
    </ligand>
</feature>
<feature type="binding site" evidence="1">
    <location>
        <position position="73"/>
    </location>
    <ligand>
        <name>Mg(2+)</name>
        <dbReference type="ChEBI" id="CHEBI:18420"/>
        <label>3</label>
    </ligand>
</feature>
<feature type="binding site" evidence="1">
    <location>
        <position position="73"/>
    </location>
    <ligand>
        <name>Mg(2+)</name>
        <dbReference type="ChEBI" id="CHEBI:18420"/>
        <label>4</label>
    </ligand>
</feature>
<feature type="binding site" evidence="1">
    <location>
        <position position="104"/>
    </location>
    <ligand>
        <name>ATP</name>
        <dbReference type="ChEBI" id="CHEBI:30616"/>
    </ligand>
</feature>
<feature type="binding site" evidence="1">
    <location>
        <begin position="121"/>
        <end position="122"/>
    </location>
    <ligand>
        <name>ATP</name>
        <dbReference type="ChEBI" id="CHEBI:30616"/>
    </ligand>
</feature>
<feature type="binding site" evidence="1">
    <location>
        <position position="122"/>
    </location>
    <ligand>
        <name>Mg(2+)</name>
        <dbReference type="ChEBI" id="CHEBI:18420"/>
        <label>1</label>
    </ligand>
</feature>
<feature type="binding site" evidence="1">
    <location>
        <position position="145"/>
    </location>
    <ligand>
        <name>ATP</name>
        <dbReference type="ChEBI" id="CHEBI:30616"/>
    </ligand>
</feature>
<feature type="binding site" evidence="1">
    <location>
        <position position="218"/>
    </location>
    <ligand>
        <name>Mg(2+)</name>
        <dbReference type="ChEBI" id="CHEBI:18420"/>
        <label>3</label>
    </ligand>
</feature>
<feature type="binding site" evidence="1">
    <location>
        <position position="220"/>
    </location>
    <ligand>
        <name>ATP</name>
        <dbReference type="ChEBI" id="CHEBI:30616"/>
    </ligand>
</feature>
<feature type="binding site" evidence="1">
    <location>
        <position position="221"/>
    </location>
    <ligand>
        <name>Mg(2+)</name>
        <dbReference type="ChEBI" id="CHEBI:18420"/>
        <label>5</label>
    </ligand>
</feature>
<feature type="binding site" evidence="1">
    <location>
        <position position="268"/>
    </location>
    <ligand>
        <name>substrate</name>
    </ligand>
</feature>
<feature type="binding site" evidence="1">
    <location>
        <position position="315"/>
    </location>
    <ligand>
        <name>substrate</name>
    </ligand>
</feature>
<protein>
    <recommendedName>
        <fullName evidence="1">Thiamine-monophosphate kinase</fullName>
        <shortName evidence="1">TMP kinase</shortName>
        <shortName evidence="1">Thiamine-phosphate kinase</shortName>
        <ecNumber evidence="1">2.7.4.16</ecNumber>
    </recommendedName>
</protein>
<accession>Q60337</accession>
<dbReference type="EC" id="2.7.4.16" evidence="1"/>
<dbReference type="EMBL" id="L77117">
    <property type="protein sequence ID" value="AAB98008.1"/>
    <property type="molecule type" value="Genomic_DNA"/>
</dbReference>
<dbReference type="PIR" id="D64303">
    <property type="entry name" value="D64303"/>
</dbReference>
<dbReference type="RefSeq" id="WP_010869520.1">
    <property type="nucleotide sequence ID" value="NC_000909.1"/>
</dbReference>
<dbReference type="SMR" id="Q60337"/>
<dbReference type="FunCoup" id="Q60337">
    <property type="interactions" value="114"/>
</dbReference>
<dbReference type="STRING" id="243232.MJ_0028"/>
<dbReference type="TCDB" id="8.A.159.1.2">
    <property type="family name" value="the march ubiquitin ligase (march) family"/>
</dbReference>
<dbReference type="PaxDb" id="243232-MJ_0028"/>
<dbReference type="DNASU" id="1450866"/>
<dbReference type="EnsemblBacteria" id="AAB98008">
    <property type="protein sequence ID" value="AAB98008"/>
    <property type="gene ID" value="MJ_0028"/>
</dbReference>
<dbReference type="GeneID" id="1450866"/>
<dbReference type="KEGG" id="mja:MJ_0028"/>
<dbReference type="eggNOG" id="arCOG00638">
    <property type="taxonomic scope" value="Archaea"/>
</dbReference>
<dbReference type="HOGENOM" id="CLU_046964_2_0_2"/>
<dbReference type="InParanoid" id="Q60337"/>
<dbReference type="OrthoDB" id="45909at2157"/>
<dbReference type="PhylomeDB" id="Q60337"/>
<dbReference type="UniPathway" id="UPA00060">
    <property type="reaction ID" value="UER00142"/>
</dbReference>
<dbReference type="Proteomes" id="UP000000805">
    <property type="component" value="Chromosome"/>
</dbReference>
<dbReference type="GO" id="GO:0005524">
    <property type="term" value="F:ATP binding"/>
    <property type="evidence" value="ECO:0007669"/>
    <property type="project" value="UniProtKB-UniRule"/>
</dbReference>
<dbReference type="GO" id="GO:0000287">
    <property type="term" value="F:magnesium ion binding"/>
    <property type="evidence" value="ECO:0007669"/>
    <property type="project" value="UniProtKB-UniRule"/>
</dbReference>
<dbReference type="GO" id="GO:0009030">
    <property type="term" value="F:thiamine-phosphate kinase activity"/>
    <property type="evidence" value="ECO:0007669"/>
    <property type="project" value="UniProtKB-UniRule"/>
</dbReference>
<dbReference type="GO" id="GO:0009228">
    <property type="term" value="P:thiamine biosynthetic process"/>
    <property type="evidence" value="ECO:0007669"/>
    <property type="project" value="UniProtKB-KW"/>
</dbReference>
<dbReference type="GO" id="GO:0009229">
    <property type="term" value="P:thiamine diphosphate biosynthetic process"/>
    <property type="evidence" value="ECO:0007669"/>
    <property type="project" value="UniProtKB-UniRule"/>
</dbReference>
<dbReference type="CDD" id="cd02194">
    <property type="entry name" value="ThiL"/>
    <property type="match status" value="1"/>
</dbReference>
<dbReference type="Gene3D" id="3.90.650.10">
    <property type="entry name" value="PurM-like C-terminal domain"/>
    <property type="match status" value="1"/>
</dbReference>
<dbReference type="Gene3D" id="3.30.1330.10">
    <property type="entry name" value="PurM-like, N-terminal domain"/>
    <property type="match status" value="1"/>
</dbReference>
<dbReference type="HAMAP" id="MF_02128">
    <property type="entry name" value="TMP_kinase"/>
    <property type="match status" value="1"/>
</dbReference>
<dbReference type="InterPro" id="IPR036676">
    <property type="entry name" value="PurM-like_C_sf"/>
</dbReference>
<dbReference type="InterPro" id="IPR016188">
    <property type="entry name" value="PurM-like_N"/>
</dbReference>
<dbReference type="InterPro" id="IPR036921">
    <property type="entry name" value="PurM-like_N_sf"/>
</dbReference>
<dbReference type="InterPro" id="IPR006283">
    <property type="entry name" value="ThiL-like"/>
</dbReference>
<dbReference type="NCBIfam" id="TIGR01379">
    <property type="entry name" value="thiL"/>
    <property type="match status" value="1"/>
</dbReference>
<dbReference type="PANTHER" id="PTHR30270">
    <property type="entry name" value="THIAMINE-MONOPHOSPHATE KINASE"/>
    <property type="match status" value="1"/>
</dbReference>
<dbReference type="PANTHER" id="PTHR30270:SF3">
    <property type="entry name" value="THIAMINE-MONOPHOSPHATE KINASE"/>
    <property type="match status" value="1"/>
</dbReference>
<dbReference type="Pfam" id="PF00586">
    <property type="entry name" value="AIRS"/>
    <property type="match status" value="1"/>
</dbReference>
<dbReference type="PIRSF" id="PIRSF005303">
    <property type="entry name" value="Thiam_monoph_kin"/>
    <property type="match status" value="1"/>
</dbReference>
<dbReference type="SUPFAM" id="SSF56042">
    <property type="entry name" value="PurM C-terminal domain-like"/>
    <property type="match status" value="1"/>
</dbReference>
<dbReference type="SUPFAM" id="SSF55326">
    <property type="entry name" value="PurM N-terminal domain-like"/>
    <property type="match status" value="1"/>
</dbReference>
<proteinExistence type="inferred from homology"/>